<reference key="1">
    <citation type="submission" date="2006-11" db="EMBL/GenBank/DDBJ databases">
        <title>Sequence of Campylobacter fetus subsp. fetus 82-40.</title>
        <authorList>
            <person name="Fouts D.E."/>
            <person name="Nelson K.E."/>
        </authorList>
    </citation>
    <scope>NUCLEOTIDE SEQUENCE [LARGE SCALE GENOMIC DNA]</scope>
    <source>
        <strain>82-40</strain>
    </source>
</reference>
<protein>
    <recommendedName>
        <fullName evidence="1">Aspartyl/glutamyl-tRNA(Asn/Gln) amidotransferase subunit C</fullName>
        <shortName evidence="1">Asp/Glu-ADT subunit C</shortName>
        <ecNumber evidence="1">6.3.5.-</ecNumber>
    </recommendedName>
</protein>
<comment type="function">
    <text evidence="1">Allows the formation of correctly charged Asn-tRNA(Asn) or Gln-tRNA(Gln) through the transamidation of misacylated Asp-tRNA(Asn) or Glu-tRNA(Gln) in organisms which lack either or both of asparaginyl-tRNA or glutaminyl-tRNA synthetases. The reaction takes place in the presence of glutamine and ATP through an activated phospho-Asp-tRNA(Asn) or phospho-Glu-tRNA(Gln).</text>
</comment>
<comment type="catalytic activity">
    <reaction evidence="1">
        <text>L-glutamyl-tRNA(Gln) + L-glutamine + ATP + H2O = L-glutaminyl-tRNA(Gln) + L-glutamate + ADP + phosphate + H(+)</text>
        <dbReference type="Rhea" id="RHEA:17521"/>
        <dbReference type="Rhea" id="RHEA-COMP:9681"/>
        <dbReference type="Rhea" id="RHEA-COMP:9684"/>
        <dbReference type="ChEBI" id="CHEBI:15377"/>
        <dbReference type="ChEBI" id="CHEBI:15378"/>
        <dbReference type="ChEBI" id="CHEBI:29985"/>
        <dbReference type="ChEBI" id="CHEBI:30616"/>
        <dbReference type="ChEBI" id="CHEBI:43474"/>
        <dbReference type="ChEBI" id="CHEBI:58359"/>
        <dbReference type="ChEBI" id="CHEBI:78520"/>
        <dbReference type="ChEBI" id="CHEBI:78521"/>
        <dbReference type="ChEBI" id="CHEBI:456216"/>
    </reaction>
</comment>
<comment type="catalytic activity">
    <reaction evidence="1">
        <text>L-aspartyl-tRNA(Asn) + L-glutamine + ATP + H2O = L-asparaginyl-tRNA(Asn) + L-glutamate + ADP + phosphate + 2 H(+)</text>
        <dbReference type="Rhea" id="RHEA:14513"/>
        <dbReference type="Rhea" id="RHEA-COMP:9674"/>
        <dbReference type="Rhea" id="RHEA-COMP:9677"/>
        <dbReference type="ChEBI" id="CHEBI:15377"/>
        <dbReference type="ChEBI" id="CHEBI:15378"/>
        <dbReference type="ChEBI" id="CHEBI:29985"/>
        <dbReference type="ChEBI" id="CHEBI:30616"/>
        <dbReference type="ChEBI" id="CHEBI:43474"/>
        <dbReference type="ChEBI" id="CHEBI:58359"/>
        <dbReference type="ChEBI" id="CHEBI:78515"/>
        <dbReference type="ChEBI" id="CHEBI:78516"/>
        <dbReference type="ChEBI" id="CHEBI:456216"/>
    </reaction>
</comment>
<comment type="subunit">
    <text evidence="1">Heterotrimer of A, B and C subunits.</text>
</comment>
<comment type="similarity">
    <text evidence="1">Belongs to the GatC family.</text>
</comment>
<keyword id="KW-0067">ATP-binding</keyword>
<keyword id="KW-0436">Ligase</keyword>
<keyword id="KW-0547">Nucleotide-binding</keyword>
<keyword id="KW-0648">Protein biosynthesis</keyword>
<proteinExistence type="inferred from homology"/>
<gene>
    <name evidence="1" type="primary">gatC</name>
    <name type="ordered locus">CFF8240_1146</name>
</gene>
<dbReference type="EC" id="6.3.5.-" evidence="1"/>
<dbReference type="EMBL" id="CP000487">
    <property type="protein sequence ID" value="ABK82451.1"/>
    <property type="molecule type" value="Genomic_DNA"/>
</dbReference>
<dbReference type="RefSeq" id="WP_002849777.1">
    <property type="nucleotide sequence ID" value="NC_008599.1"/>
</dbReference>
<dbReference type="SMR" id="A0RQ21"/>
<dbReference type="GeneID" id="61064971"/>
<dbReference type="KEGG" id="cff:CFF8240_1146"/>
<dbReference type="eggNOG" id="COG0721">
    <property type="taxonomic scope" value="Bacteria"/>
</dbReference>
<dbReference type="HOGENOM" id="CLU_105899_2_1_7"/>
<dbReference type="Proteomes" id="UP000000760">
    <property type="component" value="Chromosome"/>
</dbReference>
<dbReference type="GO" id="GO:0050566">
    <property type="term" value="F:asparaginyl-tRNA synthase (glutamine-hydrolyzing) activity"/>
    <property type="evidence" value="ECO:0007669"/>
    <property type="project" value="RHEA"/>
</dbReference>
<dbReference type="GO" id="GO:0005524">
    <property type="term" value="F:ATP binding"/>
    <property type="evidence" value="ECO:0007669"/>
    <property type="project" value="UniProtKB-KW"/>
</dbReference>
<dbReference type="GO" id="GO:0050567">
    <property type="term" value="F:glutaminyl-tRNA synthase (glutamine-hydrolyzing) activity"/>
    <property type="evidence" value="ECO:0007669"/>
    <property type="project" value="UniProtKB-UniRule"/>
</dbReference>
<dbReference type="GO" id="GO:0070681">
    <property type="term" value="P:glutaminyl-tRNAGln biosynthesis via transamidation"/>
    <property type="evidence" value="ECO:0007669"/>
    <property type="project" value="TreeGrafter"/>
</dbReference>
<dbReference type="GO" id="GO:0006450">
    <property type="term" value="P:regulation of translational fidelity"/>
    <property type="evidence" value="ECO:0007669"/>
    <property type="project" value="InterPro"/>
</dbReference>
<dbReference type="GO" id="GO:0006412">
    <property type="term" value="P:translation"/>
    <property type="evidence" value="ECO:0007669"/>
    <property type="project" value="UniProtKB-UniRule"/>
</dbReference>
<dbReference type="Gene3D" id="1.10.20.60">
    <property type="entry name" value="Glu-tRNAGln amidotransferase C subunit, N-terminal domain"/>
    <property type="match status" value="1"/>
</dbReference>
<dbReference type="HAMAP" id="MF_00122">
    <property type="entry name" value="GatC"/>
    <property type="match status" value="1"/>
</dbReference>
<dbReference type="InterPro" id="IPR036113">
    <property type="entry name" value="Asp/Glu-ADT_sf_sub_c"/>
</dbReference>
<dbReference type="InterPro" id="IPR003837">
    <property type="entry name" value="GatC"/>
</dbReference>
<dbReference type="NCBIfam" id="TIGR00135">
    <property type="entry name" value="gatC"/>
    <property type="match status" value="1"/>
</dbReference>
<dbReference type="PANTHER" id="PTHR15004">
    <property type="entry name" value="GLUTAMYL-TRNA(GLN) AMIDOTRANSFERASE SUBUNIT C, MITOCHONDRIAL"/>
    <property type="match status" value="1"/>
</dbReference>
<dbReference type="PANTHER" id="PTHR15004:SF0">
    <property type="entry name" value="GLUTAMYL-TRNA(GLN) AMIDOTRANSFERASE SUBUNIT C, MITOCHONDRIAL"/>
    <property type="match status" value="1"/>
</dbReference>
<dbReference type="Pfam" id="PF02686">
    <property type="entry name" value="GatC"/>
    <property type="match status" value="1"/>
</dbReference>
<dbReference type="SUPFAM" id="SSF141000">
    <property type="entry name" value="Glu-tRNAGln amidotransferase C subunit"/>
    <property type="match status" value="1"/>
</dbReference>
<name>GATC_CAMFF</name>
<organism>
    <name type="scientific">Campylobacter fetus subsp. fetus (strain 82-40)</name>
    <dbReference type="NCBI Taxonomy" id="360106"/>
    <lineage>
        <taxon>Bacteria</taxon>
        <taxon>Pseudomonadati</taxon>
        <taxon>Campylobacterota</taxon>
        <taxon>Epsilonproteobacteria</taxon>
        <taxon>Campylobacterales</taxon>
        <taxon>Campylobacteraceae</taxon>
        <taxon>Campylobacter</taxon>
    </lineage>
</organism>
<accession>A0RQ21</accession>
<evidence type="ECO:0000255" key="1">
    <source>
        <dbReference type="HAMAP-Rule" id="MF_00122"/>
    </source>
</evidence>
<sequence length="95" mass="10701">MQIDDKMLEKLEKLSALKIPDQNREEFKSQLGKIVDFVDILNELDLDGIEATVSTIGGGTPFREDISKEGSVIDGILTHAPKKQNRYFEVPKIIE</sequence>
<feature type="chain" id="PRO_1000016099" description="Aspartyl/glutamyl-tRNA(Asn/Gln) amidotransferase subunit C">
    <location>
        <begin position="1"/>
        <end position="95"/>
    </location>
</feature>